<comment type="function">
    <molecule>Hexon-linking protein-C</molecule>
    <text evidence="2">Structural component of the virion that acts as a cement protein on the capsid interior and which glue the peripentonal hexons and group-of-nine hexons together.</text>
</comment>
<comment type="subunit">
    <text evidence="2">Interacts with the peripentonal hexons as well as the hexons in the facets. Part of a complex composed of the core-capsid bridging protein, the endosome lysis protein VI and the hexon-linking protein VIII; these interactions bridge the virus core to the capsid.</text>
</comment>
<comment type="subcellular location">
    <molecule>Pre-hexon-linking protein VIII</molecule>
    <subcellularLocation>
        <location evidence="2">Host nucleus</location>
    </subcellularLocation>
</comment>
<comment type="subcellular location">
    <molecule>Hexon-linking protein-C</molecule>
    <subcellularLocation>
        <location evidence="2">Virion</location>
    </subcellularLocation>
    <text evidence="2">Located on the inner side of the capsid shell. Present in 120 copies per virion.</text>
</comment>
<comment type="induction">
    <text>Expressed in the late phase of the viral replicative cycle.</text>
</comment>
<comment type="PTM">
    <text evidence="2">Cleaved by the viral protease during virion maturation. May cause the middle segment to be shed from the capsid.</text>
</comment>
<comment type="miscellaneous">
    <text evidence="1">All late proteins expressed from the major late promoter are produced by alternative splicing and alternative polyadenylation of the same gene giving rise to non-overlapping ORFs. A leader sequence is present in the N-terminus of all these mRNAs and is recognized by the viral shutoff protein to provide expression although conventional translation via ribosome scanning from the cap has been shut off in the host cell (By similarity).</text>
</comment>
<comment type="similarity">
    <text evidence="4">Belongs to the adenoviridae hexon-linking protein family.</text>
</comment>
<evidence type="ECO:0000250" key="1"/>
<evidence type="ECO:0000250" key="2">
    <source>
        <dbReference type="UniProtKB" id="P24936"/>
    </source>
</evidence>
<evidence type="ECO:0000255" key="3"/>
<evidence type="ECO:0000305" key="4"/>
<sequence length="71" mass="7798">GSRSSFSPTQAFLTLQQASSTPRTGGVGSYQFVREFVPEVYLNPFSGPPDTFPDQFIPNYDIVTNSVDGYD</sequence>
<dbReference type="EMBL" id="M60937">
    <property type="protein sequence ID" value="AAA42533.1"/>
    <property type="molecule type" value="Genomic_DNA"/>
</dbReference>
<dbReference type="PIR" id="A40318">
    <property type="entry name" value="A40318"/>
</dbReference>
<dbReference type="SMR" id="P22231"/>
<dbReference type="GO" id="GO:0042025">
    <property type="term" value="C:host cell nucleus"/>
    <property type="evidence" value="ECO:0007669"/>
    <property type="project" value="UniProtKB-SubCell"/>
</dbReference>
<dbReference type="GO" id="GO:0019028">
    <property type="term" value="C:viral capsid"/>
    <property type="evidence" value="ECO:0007669"/>
    <property type="project" value="UniProtKB-KW"/>
</dbReference>
<dbReference type="GO" id="GO:0031423">
    <property type="term" value="F:hexon binding"/>
    <property type="evidence" value="ECO:0007669"/>
    <property type="project" value="InterPro"/>
</dbReference>
<dbReference type="InterPro" id="IPR000646">
    <property type="entry name" value="Adeno_PVIII"/>
</dbReference>
<dbReference type="Pfam" id="PF01310">
    <property type="entry name" value="Adeno_PVIII"/>
    <property type="match status" value="1"/>
</dbReference>
<organism>
    <name type="scientific">Canine adenovirus serotype 1 (strain Glaxo)</name>
    <name type="common">CAdV-1</name>
    <name type="synonym">Canine adenovirus 1 (strain Glaxo)</name>
    <dbReference type="NCBI Taxonomy" id="10513"/>
    <lineage>
        <taxon>Viruses</taxon>
        <taxon>Varidnaviria</taxon>
        <taxon>Bamfordvirae</taxon>
        <taxon>Preplasmiviricota</taxon>
        <taxon>Tectiliviricetes</taxon>
        <taxon>Rowavirales</taxon>
        <taxon>Adenoviridae</taxon>
        <taxon>Mastadenovirus</taxon>
        <taxon>Canine mastadenovirus A</taxon>
    </lineage>
</organism>
<gene>
    <name type="ORF">L4</name>
</gene>
<name>CAP8_ADECG</name>
<organismHost>
    <name type="scientific">Canis lupus familiaris</name>
    <name type="common">Dog</name>
    <name type="synonym">Canis familiaris</name>
    <dbReference type="NCBI Taxonomy" id="9615"/>
</organismHost>
<proteinExistence type="evidence at transcript level"/>
<feature type="chain" id="PRO_0000421411" description="Pre-hexon-linking protein VIII">
    <location>
        <begin position="1" status="less than"/>
        <end position="71"/>
    </location>
</feature>
<feature type="peptide" id="PRO_0000221843" description="Hexon-linking protein-C">
    <location>
        <begin position="2"/>
        <end position="71"/>
    </location>
</feature>
<feature type="site" description="Cleavage; by viral protease" evidence="3">
    <location>
        <begin position="1"/>
        <end position="2"/>
    </location>
</feature>
<feature type="non-terminal residue">
    <location>
        <position position="1"/>
    </location>
</feature>
<reference key="1">
    <citation type="journal article" date="1991" name="Virology">
        <title>Sequence analysis of putative E3 and fiber genomic regions of two strains of canine adenovirus type 1.</title>
        <authorList>
            <person name="Dragulev B.P."/>
            <person name="Sira S."/>
            <person name="Abouhaidar M.G."/>
            <person name="Campbell J.B."/>
        </authorList>
    </citation>
    <scope>NUCLEOTIDE SEQUENCE [GENOMIC DNA]</scope>
</reference>
<accession>P22231</accession>
<protein>
    <recommendedName>
        <fullName>Pre-hexon-linking protein VIII</fullName>
    </recommendedName>
    <alternativeName>
        <fullName>Pre-protein VIII</fullName>
        <shortName>pVIII</shortName>
    </alternativeName>
    <component>
        <recommendedName>
            <fullName>Hexon-linking protein-C</fullName>
        </recommendedName>
        <alternativeName>
            <fullName>7.6 kDa protein VIII</fullName>
        </alternativeName>
        <alternativeName>
            <fullName>Protein VIII-C</fullName>
        </alternativeName>
    </component>
</protein>
<keyword id="KW-0167">Capsid protein</keyword>
<keyword id="KW-1048">Host nucleus</keyword>
<keyword id="KW-0426">Late protein</keyword>
<keyword id="KW-0946">Virion</keyword>